<sequence>MWRIKIAEGGKDPYLYSTNNYVGRQTWEFDPDAGTPEERAEVEEARQNFYKNRYQVKPCGDLLWRLQFLGEKNFEQTIPQVRIEEGEGITYEKATRALRRTVQFFSALQASDGHWPAEIAGPLFFLPPLVMCVYITGHLDAVFPAEHRKEILRYIYYHQNEDGGWGLHIEGHSTMFCTALNYICMRIIGEGPNGGQDDACARARKWIHDHGSVTNIPSWGKTWLSILGVYDWSGSNPMPPEFWMLPSFLPMHPAKMWCYCRMVYMPMSYLYGKRFVGPITPLIQQLREELFTQPYDQINWKKTRHQCAPEDLYYPHPFVQDLIWDCLYIFTEPLLTRWPLNEIIRKKALEVTMKHIHYEDESSRYITIGCVEKVLCMLACWVEDPNGDYFKKHLARIPDYIWVAEDGMKMQSFGSQEWDTGFAIQALLATNLTDEIGDVLRRGHDFIKKSQVRDNPSGDFKSMYRHISKGSWTFSDQDHGWQVSDCTAEGLKCCLLFSMMPPEIVGEHMVPERLYDSVNVLLSLQSKNGGLSAWEPAGAQEWLELLNPTEFFADIVIEHEYVECTSSAIHALVLFKKLYPGHRKKEIDNFIVNAVRYLESIQTSDGGWYGNWGVCFTYGTWFALGGLAAAGKTYNNCLAMRKAVDFLLRIQRDNGGWGESYLSCPEKRYVPLEGNRSNLVHTAWALMALIHAGQMDRDPTPLHRAARLMINSQLEDGDFPQQEITGVFMKNCMLHYAAYRNIYPLWALAEYRRRVPLPS</sequence>
<reference key="1">
    <citation type="journal article" date="2007" name="FEBS J.">
        <title>Triterpene synthases from the Okinawan mangrove tribe, Rhizophoraceae.</title>
        <authorList>
            <person name="Basyuni M."/>
            <person name="Oku H."/>
            <person name="Tsujimoto E."/>
            <person name="Kinjo K."/>
            <person name="Baba S."/>
            <person name="Takara K."/>
        </authorList>
    </citation>
    <scope>NUCLEOTIDE SEQUENCE [MRNA]</scope>
    <scope>FUNCTION</scope>
    <scope>CATALYTIC ACTIVITY</scope>
    <source>
        <tissue>Leaf</tissue>
    </source>
</reference>
<keyword id="KW-0413">Isomerase</keyword>
<keyword id="KW-0677">Repeat</keyword>
<evidence type="ECO:0000250" key="1">
    <source>
        <dbReference type="UniProtKB" id="P48449"/>
    </source>
</evidence>
<evidence type="ECO:0000269" key="2">
    <source>
    </source>
</evidence>
<evidence type="ECO:0000303" key="3">
    <source>
    </source>
</evidence>
<evidence type="ECO:0000305" key="4"/>
<evidence type="ECO:0000305" key="5">
    <source>
    </source>
</evidence>
<name>BAS_BRUGY</name>
<gene>
    <name type="primary">BAS</name>
</gene>
<comment type="function">
    <text evidence="2">Oxidosqualene cyclase that specifically catalyzes the biosynthesis of beta-amyrin.</text>
</comment>
<comment type="catalytic activity">
    <reaction evidence="2">
        <text>(S)-2,3-epoxysqualene = beta-amyrin</text>
        <dbReference type="Rhea" id="RHEA:31007"/>
        <dbReference type="ChEBI" id="CHEBI:10352"/>
        <dbReference type="ChEBI" id="CHEBI:15441"/>
        <dbReference type="EC" id="5.4.99.39"/>
    </reaction>
    <physiologicalReaction direction="left-to-right" evidence="5">
        <dbReference type="Rhea" id="RHEA:31008"/>
    </physiologicalReaction>
</comment>
<comment type="pathway">
    <text evidence="5">Terpene metabolism.</text>
</comment>
<comment type="similarity">
    <text evidence="4">Belongs to the terpene cyclase/mutase family.</text>
</comment>
<feature type="chain" id="PRO_0000412989" description="Beta-amyrin synthase">
    <location>
        <begin position="1"/>
        <end position="759"/>
    </location>
</feature>
<feature type="repeat" description="PFTB 1">
    <location>
        <begin position="148"/>
        <end position="189"/>
    </location>
</feature>
<feature type="repeat" description="PFTB 2">
    <location>
        <begin position="514"/>
        <end position="559"/>
    </location>
</feature>
<feature type="repeat" description="PFTB 3">
    <location>
        <begin position="591"/>
        <end position="631"/>
    </location>
</feature>
<feature type="repeat" description="PFTB 4">
    <location>
        <begin position="640"/>
        <end position="681"/>
    </location>
</feature>
<feature type="active site" description="Proton donor" evidence="1">
    <location>
        <position position="485"/>
    </location>
</feature>
<protein>
    <recommendedName>
        <fullName evidence="3">Beta-amyrin synthase</fullName>
        <shortName evidence="3">BgbAS</shortName>
        <ecNumber evidence="2">5.4.99.39</ecNumber>
    </recommendedName>
</protein>
<accession>A8CDT2</accession>
<proteinExistence type="evidence at protein level"/>
<dbReference type="EC" id="5.4.99.39" evidence="2"/>
<dbReference type="EMBL" id="AB289585">
    <property type="protein sequence ID" value="BAF80443.1"/>
    <property type="molecule type" value="mRNA"/>
</dbReference>
<dbReference type="SMR" id="A8CDT2"/>
<dbReference type="KEGG" id="ag:BAF80443"/>
<dbReference type="BioCyc" id="MetaCyc:MONOMER-14451"/>
<dbReference type="BRENDA" id="5.4.99.39">
    <property type="organism ID" value="1002"/>
</dbReference>
<dbReference type="GO" id="GO:0005811">
    <property type="term" value="C:lipid droplet"/>
    <property type="evidence" value="ECO:0007669"/>
    <property type="project" value="InterPro"/>
</dbReference>
<dbReference type="GO" id="GO:0042300">
    <property type="term" value="F:beta-amyrin synthase activity"/>
    <property type="evidence" value="ECO:0000314"/>
    <property type="project" value="UniProtKB"/>
</dbReference>
<dbReference type="GO" id="GO:0016104">
    <property type="term" value="P:triterpenoid biosynthetic process"/>
    <property type="evidence" value="ECO:0000314"/>
    <property type="project" value="UniProtKB"/>
</dbReference>
<dbReference type="CDD" id="cd02892">
    <property type="entry name" value="SQCY_1"/>
    <property type="match status" value="1"/>
</dbReference>
<dbReference type="FunFam" id="1.50.10.20:FF:000011">
    <property type="entry name" value="Terpene cyclase/mutase family member"/>
    <property type="match status" value="1"/>
</dbReference>
<dbReference type="FunFam" id="1.50.10.20:FF:000064">
    <property type="entry name" value="Uncharacterized protein"/>
    <property type="match status" value="1"/>
</dbReference>
<dbReference type="Gene3D" id="1.50.10.20">
    <property type="match status" value="2"/>
</dbReference>
<dbReference type="InterPro" id="IPR032696">
    <property type="entry name" value="SQ_cyclase_C"/>
</dbReference>
<dbReference type="InterPro" id="IPR032697">
    <property type="entry name" value="SQ_cyclase_N"/>
</dbReference>
<dbReference type="InterPro" id="IPR018333">
    <property type="entry name" value="Squalene_cyclase"/>
</dbReference>
<dbReference type="InterPro" id="IPR008930">
    <property type="entry name" value="Terpenoid_cyclase/PrenylTrfase"/>
</dbReference>
<dbReference type="NCBIfam" id="TIGR01787">
    <property type="entry name" value="squalene_cyclas"/>
    <property type="match status" value="1"/>
</dbReference>
<dbReference type="PANTHER" id="PTHR11764:SF58">
    <property type="entry name" value="BETA-AMYRIN SYNTHASE-RELATED"/>
    <property type="match status" value="1"/>
</dbReference>
<dbReference type="PANTHER" id="PTHR11764">
    <property type="entry name" value="TERPENE CYCLASE/MUTASE FAMILY MEMBER"/>
    <property type="match status" value="1"/>
</dbReference>
<dbReference type="Pfam" id="PF13243">
    <property type="entry name" value="SQHop_cyclase_C"/>
    <property type="match status" value="1"/>
</dbReference>
<dbReference type="Pfam" id="PF13249">
    <property type="entry name" value="SQHop_cyclase_N"/>
    <property type="match status" value="1"/>
</dbReference>
<dbReference type="SFLD" id="SFLDG01016">
    <property type="entry name" value="Prenyltransferase_Like_2"/>
    <property type="match status" value="1"/>
</dbReference>
<dbReference type="SUPFAM" id="SSF48239">
    <property type="entry name" value="Terpenoid cyclases/Protein prenyltransferases"/>
    <property type="match status" value="2"/>
</dbReference>
<organism>
    <name type="scientific">Bruguiera gymnorhiza</name>
    <name type="common">Burma mangrove</name>
    <name type="synonym">Rhizophora gymnorhiza</name>
    <dbReference type="NCBI Taxonomy" id="39984"/>
    <lineage>
        <taxon>Eukaryota</taxon>
        <taxon>Viridiplantae</taxon>
        <taxon>Streptophyta</taxon>
        <taxon>Embryophyta</taxon>
        <taxon>Tracheophyta</taxon>
        <taxon>Spermatophyta</taxon>
        <taxon>Magnoliopsida</taxon>
        <taxon>eudicotyledons</taxon>
        <taxon>Gunneridae</taxon>
        <taxon>Pentapetalae</taxon>
        <taxon>rosids</taxon>
        <taxon>fabids</taxon>
        <taxon>Malpighiales</taxon>
        <taxon>Rhizophoraceae</taxon>
        <taxon>Bruguiera</taxon>
    </lineage>
</organism>